<sequence length="136" mass="14807">MNPIDPQVAPWEHPGAAPETPCTNCYCKKCCFHCPVCFTKKALGISYGRKRRGRKSAVHSTNNQDPVRQQSLPKRSRIQNSQEESQEEVEAETTSGGRPRQQDSSVSSGRTSGTSSSGYTRPFKTSSGSSGSACKH</sequence>
<feature type="chain" id="PRO_0000248195" description="Protein Tat">
    <location>
        <begin position="1"/>
        <end position="136"/>
    </location>
</feature>
<feature type="region of interest" description="Cysteine-rich" evidence="1">
    <location>
        <begin position="22"/>
        <end position="37"/>
    </location>
</feature>
<feature type="region of interest" description="Core" evidence="1">
    <location>
        <begin position="38"/>
        <end position="48"/>
    </location>
</feature>
<feature type="region of interest" description="Disordered" evidence="4">
    <location>
        <begin position="48"/>
        <end position="136"/>
    </location>
</feature>
<feature type="short sequence motif" description="Nuclear localization signal, and RNA-binding (TAR)" evidence="3">
    <location>
        <begin position="49"/>
        <end position="55"/>
    </location>
</feature>
<feature type="compositionally biased region" description="Basic residues" evidence="4">
    <location>
        <begin position="48"/>
        <end position="57"/>
    </location>
</feature>
<feature type="compositionally biased region" description="Polar residues" evidence="4">
    <location>
        <begin position="58"/>
        <end position="73"/>
    </location>
</feature>
<feature type="compositionally biased region" description="Low complexity" evidence="4">
    <location>
        <begin position="104"/>
        <end position="120"/>
    </location>
</feature>
<feature type="compositionally biased region" description="Polar residues" evidence="4">
    <location>
        <begin position="123"/>
        <end position="136"/>
    </location>
</feature>
<organism>
    <name type="scientific">Simian immunodeficiency virus (isolate TAN1)</name>
    <name type="common">SIV-cpz</name>
    <name type="synonym">Chimpanzee immunodeficiency virus</name>
    <dbReference type="NCBI Taxonomy" id="388910"/>
    <lineage>
        <taxon>Viruses</taxon>
        <taxon>Riboviria</taxon>
        <taxon>Pararnavirae</taxon>
        <taxon>Artverviricota</taxon>
        <taxon>Revtraviricetes</taxon>
        <taxon>Ortervirales</taxon>
        <taxon>Retroviridae</taxon>
        <taxon>Orthoretrovirinae</taxon>
        <taxon>Lentivirus</taxon>
        <taxon>Simian immunodeficiency virus</taxon>
    </lineage>
</organism>
<keyword id="KW-0010">Activator</keyword>
<keyword id="KW-1048">Host nucleus</keyword>
<keyword id="KW-0945">Host-virus interaction</keyword>
<keyword id="KW-1185">Reference proteome</keyword>
<keyword id="KW-0694">RNA-binding</keyword>
<keyword id="KW-0804">Transcription</keyword>
<keyword id="KW-0805">Transcription regulation</keyword>
<reference key="1">
    <citation type="journal article" date="2003" name="J. Virol.">
        <title>Amplification of a complete simian immunodeficiency virus genome from fecal RNA of a wild chimpanzee.</title>
        <authorList>
            <person name="Santiago M.L."/>
            <person name="Bibollet-Ruche F."/>
            <person name="Bailes E."/>
            <person name="Kamenya S."/>
            <person name="Muller M.N."/>
            <person name="Lukasik M."/>
            <person name="Pusey A.E."/>
            <person name="Collins D.A."/>
            <person name="Wrangham R.W."/>
            <person name="Goodall J."/>
            <person name="Shaw G.M."/>
            <person name="Sharp P.M."/>
            <person name="Hahn B.H."/>
        </authorList>
    </citation>
    <scope>NUCLEOTIDE SEQUENCE [GENOMIC RNA]</scope>
</reference>
<proteinExistence type="inferred from homology"/>
<dbReference type="EMBL" id="AF447763">
    <property type="protein sequence ID" value="AAO13963.1"/>
    <property type="molecule type" value="Genomic_RNA"/>
</dbReference>
<dbReference type="SMR" id="Q8AIH8"/>
<dbReference type="Proteomes" id="UP000007222">
    <property type="component" value="Segment"/>
</dbReference>
<dbReference type="GO" id="GO:0044196">
    <property type="term" value="C:host cell nucleolus"/>
    <property type="evidence" value="ECO:0007669"/>
    <property type="project" value="UniProtKB-SubCell"/>
</dbReference>
<dbReference type="GO" id="GO:0003723">
    <property type="term" value="F:RNA binding"/>
    <property type="evidence" value="ECO:0007669"/>
    <property type="project" value="UniProtKB-KW"/>
</dbReference>
<dbReference type="GO" id="GO:0001070">
    <property type="term" value="F:RNA-binding transcription regulator activity"/>
    <property type="evidence" value="ECO:0007669"/>
    <property type="project" value="InterPro"/>
</dbReference>
<dbReference type="GO" id="GO:0050434">
    <property type="term" value="P:positive regulation of viral transcription"/>
    <property type="evidence" value="ECO:0007669"/>
    <property type="project" value="InterPro"/>
</dbReference>
<dbReference type="Gene3D" id="4.10.20.10">
    <property type="entry name" value="Tat domain"/>
    <property type="match status" value="1"/>
</dbReference>
<dbReference type="InterPro" id="IPR001831">
    <property type="entry name" value="IV_Tat"/>
</dbReference>
<dbReference type="InterPro" id="IPR036963">
    <property type="entry name" value="Tat_dom_sf"/>
</dbReference>
<dbReference type="Pfam" id="PF00539">
    <property type="entry name" value="Tat"/>
    <property type="match status" value="1"/>
</dbReference>
<dbReference type="PRINTS" id="PR00055">
    <property type="entry name" value="HIVTATDOMAIN"/>
</dbReference>
<comment type="function">
    <text evidence="2">Transcriptional activator that increases RNA Pol II processivity, thereby increasing the level of full-length viral transcripts. Recognizes a hairpin structure at the 5'-LTR of the nascent viral mRNAs referred to as the transactivation responsive RNA element (TAR) and recruits the cyclin T1-CDK9 complex (P-TEFb complex) that will in turn hyperphosphorylate the RNA polymerase II to allow efficient elongation. The CDK9 component of P-TEFb and other Tat-activated kinases hyperphosphorylate the C-terminus of RNA Pol II that becomes stabilized and much more processive.</text>
</comment>
<comment type="function">
    <text evidence="1">Extracellular circulating Tat can be endocytosed by surrounding uninfected cells via the binding to several surface receptors. Endosomal low pH allows Tat to cross the endosome membrane to enter the cytosol and eventually further translocate into the nucleus, thereby inducing severe cell dysfunctions ranging from cell activation to cell death. Through (By similarity).</text>
</comment>
<comment type="subunit">
    <text evidence="1">Interacts with host CCNT1. Associates with the P-TEFb complex composed at least of Tat, P-TEFb (CDK9 and CCNT1), TAR RNA, RNA Pol II. Interacts with CCNT2; the resulting complex is unable to bind to TAR RNA (By similarity).</text>
</comment>
<comment type="subcellular location">
    <subcellularLocation>
        <location evidence="1">Host nucleus</location>
        <location evidence="1">Host nucleolus</location>
    </subcellularLocation>
</comment>
<comment type="similarity">
    <text evidence="5">Belongs to the lentiviruses Tat family.</text>
</comment>
<protein>
    <recommendedName>
        <fullName>Protein Tat</fullName>
    </recommendedName>
    <alternativeName>
        <fullName>Transactivating regulatory protein</fullName>
    </alternativeName>
</protein>
<accession>Q8AIH8</accession>
<organismHost>
    <name type="scientific">Pan troglodytes</name>
    <name type="common">Chimpanzee</name>
    <dbReference type="NCBI Taxonomy" id="9598"/>
</organismHost>
<evidence type="ECO:0000250" key="1"/>
<evidence type="ECO:0000250" key="2">
    <source>
        <dbReference type="UniProtKB" id="P04608"/>
    </source>
</evidence>
<evidence type="ECO:0000255" key="3"/>
<evidence type="ECO:0000256" key="4">
    <source>
        <dbReference type="SAM" id="MobiDB-lite"/>
    </source>
</evidence>
<evidence type="ECO:0000305" key="5"/>
<name>TAT_SIVTN</name>